<name>LIPA_NITV2</name>
<gene>
    <name evidence="1" type="primary">lipA</name>
    <name type="ordered locus">DVU_0905</name>
</gene>
<comment type="function">
    <text evidence="1">Catalyzes the radical-mediated insertion of two sulfur atoms into the C-6 and C-8 positions of the octanoyl moiety bound to the lipoyl domains of lipoate-dependent enzymes, thereby converting the octanoylated domains into lipoylated derivatives.</text>
</comment>
<comment type="catalytic activity">
    <reaction evidence="1">
        <text>[[Fe-S] cluster scaffold protein carrying a second [4Fe-4S](2+) cluster] + N(6)-octanoyl-L-lysyl-[protein] + 2 oxidized [2Fe-2S]-[ferredoxin] + 2 S-adenosyl-L-methionine + 4 H(+) = [[Fe-S] cluster scaffold protein] + N(6)-[(R)-dihydrolipoyl]-L-lysyl-[protein] + 4 Fe(3+) + 2 hydrogen sulfide + 2 5'-deoxyadenosine + 2 L-methionine + 2 reduced [2Fe-2S]-[ferredoxin]</text>
        <dbReference type="Rhea" id="RHEA:16585"/>
        <dbReference type="Rhea" id="RHEA-COMP:9928"/>
        <dbReference type="Rhea" id="RHEA-COMP:10000"/>
        <dbReference type="Rhea" id="RHEA-COMP:10001"/>
        <dbReference type="Rhea" id="RHEA-COMP:10475"/>
        <dbReference type="Rhea" id="RHEA-COMP:14568"/>
        <dbReference type="Rhea" id="RHEA-COMP:14569"/>
        <dbReference type="ChEBI" id="CHEBI:15378"/>
        <dbReference type="ChEBI" id="CHEBI:17319"/>
        <dbReference type="ChEBI" id="CHEBI:29034"/>
        <dbReference type="ChEBI" id="CHEBI:29919"/>
        <dbReference type="ChEBI" id="CHEBI:33722"/>
        <dbReference type="ChEBI" id="CHEBI:33737"/>
        <dbReference type="ChEBI" id="CHEBI:33738"/>
        <dbReference type="ChEBI" id="CHEBI:57844"/>
        <dbReference type="ChEBI" id="CHEBI:59789"/>
        <dbReference type="ChEBI" id="CHEBI:78809"/>
        <dbReference type="ChEBI" id="CHEBI:83100"/>
        <dbReference type="EC" id="2.8.1.8"/>
    </reaction>
</comment>
<comment type="cofactor">
    <cofactor evidence="1">
        <name>[4Fe-4S] cluster</name>
        <dbReference type="ChEBI" id="CHEBI:49883"/>
    </cofactor>
    <text evidence="1">Binds 2 [4Fe-4S] clusters per subunit. One cluster is coordinated with 3 cysteines and an exchangeable S-adenosyl-L-methionine.</text>
</comment>
<comment type="pathway">
    <text evidence="1">Protein modification; protein lipoylation via endogenous pathway; protein N(6)-(lipoyl)lysine from octanoyl-[acyl-carrier-protein]: step 2/2.</text>
</comment>
<comment type="subcellular location">
    <subcellularLocation>
        <location evidence="1">Cytoplasm</location>
    </subcellularLocation>
</comment>
<comment type="similarity">
    <text evidence="1">Belongs to the radical SAM superfamily. Lipoyl synthase family.</text>
</comment>
<proteinExistence type="inferred from homology"/>
<sequence length="298" mass="32017">MSSPDNSSPSLRIPPWLRVKLPCSHTFADTRALVEGLGLNTVCNSAKCPNMFECFSSGTATFLILGNVCTRNCAFCNITPGHVSPPDPDEPRRVAEAAARLALRHVVVTSVTRDDLDDGGAAHFAATITRLRAALPAATVEVLIPDFRGDHAALRTVMAAAPHIVNHNVETPPAHYARIRPQADYRQSLELLRRVKAAGGVAKSGLMVGLGENDTEVEGVLADLADCGCDIVTIGQYMRPSRQHPPVERYVHPDTFESFAACGRGMGIPFVFSAPLVRSSYNAESAYNALCTLRTEPA</sequence>
<accession>Q72DM4</accession>
<dbReference type="EC" id="2.8.1.8" evidence="1"/>
<dbReference type="EMBL" id="AE017285">
    <property type="protein sequence ID" value="AAS95385.1"/>
    <property type="molecule type" value="Genomic_DNA"/>
</dbReference>
<dbReference type="RefSeq" id="WP_010938204.1">
    <property type="nucleotide sequence ID" value="NC_002937.3"/>
</dbReference>
<dbReference type="RefSeq" id="YP_010126.1">
    <property type="nucleotide sequence ID" value="NC_002937.3"/>
</dbReference>
<dbReference type="SMR" id="Q72DM4"/>
<dbReference type="STRING" id="882.DVU_0905"/>
<dbReference type="PaxDb" id="882-DVU_0905"/>
<dbReference type="EnsemblBacteria" id="AAS95385">
    <property type="protein sequence ID" value="AAS95385"/>
    <property type="gene ID" value="DVU_0905"/>
</dbReference>
<dbReference type="KEGG" id="dvu:DVU_0905"/>
<dbReference type="PATRIC" id="fig|882.5.peg.849"/>
<dbReference type="eggNOG" id="COG0320">
    <property type="taxonomic scope" value="Bacteria"/>
</dbReference>
<dbReference type="HOGENOM" id="CLU_033144_2_1_7"/>
<dbReference type="OrthoDB" id="9787898at2"/>
<dbReference type="PhylomeDB" id="Q72DM4"/>
<dbReference type="UniPathway" id="UPA00538">
    <property type="reaction ID" value="UER00593"/>
</dbReference>
<dbReference type="Proteomes" id="UP000002194">
    <property type="component" value="Chromosome"/>
</dbReference>
<dbReference type="GO" id="GO:0005737">
    <property type="term" value="C:cytoplasm"/>
    <property type="evidence" value="ECO:0007669"/>
    <property type="project" value="UniProtKB-SubCell"/>
</dbReference>
<dbReference type="GO" id="GO:0051539">
    <property type="term" value="F:4 iron, 4 sulfur cluster binding"/>
    <property type="evidence" value="ECO:0007669"/>
    <property type="project" value="UniProtKB-UniRule"/>
</dbReference>
<dbReference type="GO" id="GO:0016992">
    <property type="term" value="F:lipoate synthase activity"/>
    <property type="evidence" value="ECO:0007669"/>
    <property type="project" value="UniProtKB-UniRule"/>
</dbReference>
<dbReference type="GO" id="GO:0046872">
    <property type="term" value="F:metal ion binding"/>
    <property type="evidence" value="ECO:0007669"/>
    <property type="project" value="UniProtKB-KW"/>
</dbReference>
<dbReference type="CDD" id="cd01335">
    <property type="entry name" value="Radical_SAM"/>
    <property type="match status" value="1"/>
</dbReference>
<dbReference type="FunFam" id="3.20.20.70:FF:000186">
    <property type="entry name" value="Lipoyl synthase"/>
    <property type="match status" value="1"/>
</dbReference>
<dbReference type="Gene3D" id="3.20.20.70">
    <property type="entry name" value="Aldolase class I"/>
    <property type="match status" value="1"/>
</dbReference>
<dbReference type="HAMAP" id="MF_00206">
    <property type="entry name" value="Lipoyl_synth"/>
    <property type="match status" value="1"/>
</dbReference>
<dbReference type="InterPro" id="IPR013785">
    <property type="entry name" value="Aldolase_TIM"/>
</dbReference>
<dbReference type="InterPro" id="IPR006638">
    <property type="entry name" value="Elp3/MiaA/NifB-like_rSAM"/>
</dbReference>
<dbReference type="InterPro" id="IPR003698">
    <property type="entry name" value="Lipoyl_synth"/>
</dbReference>
<dbReference type="InterPro" id="IPR007197">
    <property type="entry name" value="rSAM"/>
</dbReference>
<dbReference type="NCBIfam" id="TIGR00510">
    <property type="entry name" value="lipA"/>
    <property type="match status" value="1"/>
</dbReference>
<dbReference type="NCBIfam" id="NF004019">
    <property type="entry name" value="PRK05481.1"/>
    <property type="match status" value="1"/>
</dbReference>
<dbReference type="NCBIfam" id="NF009544">
    <property type="entry name" value="PRK12928.1"/>
    <property type="match status" value="1"/>
</dbReference>
<dbReference type="PANTHER" id="PTHR10949">
    <property type="entry name" value="LIPOYL SYNTHASE"/>
    <property type="match status" value="1"/>
</dbReference>
<dbReference type="PANTHER" id="PTHR10949:SF0">
    <property type="entry name" value="LIPOYL SYNTHASE, MITOCHONDRIAL"/>
    <property type="match status" value="1"/>
</dbReference>
<dbReference type="Pfam" id="PF04055">
    <property type="entry name" value="Radical_SAM"/>
    <property type="match status" value="1"/>
</dbReference>
<dbReference type="PIRSF" id="PIRSF005963">
    <property type="entry name" value="Lipoyl_synth"/>
    <property type="match status" value="1"/>
</dbReference>
<dbReference type="SFLD" id="SFLDF00271">
    <property type="entry name" value="lipoyl_synthase"/>
    <property type="match status" value="1"/>
</dbReference>
<dbReference type="SFLD" id="SFLDS00029">
    <property type="entry name" value="Radical_SAM"/>
    <property type="match status" value="1"/>
</dbReference>
<dbReference type="SMART" id="SM00729">
    <property type="entry name" value="Elp3"/>
    <property type="match status" value="1"/>
</dbReference>
<dbReference type="SUPFAM" id="SSF102114">
    <property type="entry name" value="Radical SAM enzymes"/>
    <property type="match status" value="1"/>
</dbReference>
<dbReference type="PROSITE" id="PS51918">
    <property type="entry name" value="RADICAL_SAM"/>
    <property type="match status" value="1"/>
</dbReference>
<feature type="chain" id="PRO_0000325247" description="Lipoyl synthase">
    <location>
        <begin position="1"/>
        <end position="298"/>
    </location>
</feature>
<feature type="domain" description="Radical SAM core" evidence="2">
    <location>
        <begin position="55"/>
        <end position="269"/>
    </location>
</feature>
<feature type="binding site" evidence="1">
    <location>
        <position position="43"/>
    </location>
    <ligand>
        <name>[4Fe-4S] cluster</name>
        <dbReference type="ChEBI" id="CHEBI:49883"/>
        <label>1</label>
    </ligand>
</feature>
<feature type="binding site" evidence="1">
    <location>
        <position position="48"/>
    </location>
    <ligand>
        <name>[4Fe-4S] cluster</name>
        <dbReference type="ChEBI" id="CHEBI:49883"/>
        <label>1</label>
    </ligand>
</feature>
<feature type="binding site" evidence="1">
    <location>
        <position position="54"/>
    </location>
    <ligand>
        <name>[4Fe-4S] cluster</name>
        <dbReference type="ChEBI" id="CHEBI:49883"/>
        <label>1</label>
    </ligand>
</feature>
<feature type="binding site" evidence="1">
    <location>
        <position position="69"/>
    </location>
    <ligand>
        <name>[4Fe-4S] cluster</name>
        <dbReference type="ChEBI" id="CHEBI:49883"/>
        <label>2</label>
        <note>4Fe-4S-S-AdoMet</note>
    </ligand>
</feature>
<feature type="binding site" evidence="1">
    <location>
        <position position="73"/>
    </location>
    <ligand>
        <name>[4Fe-4S] cluster</name>
        <dbReference type="ChEBI" id="CHEBI:49883"/>
        <label>2</label>
        <note>4Fe-4S-S-AdoMet</note>
    </ligand>
</feature>
<feature type="binding site" evidence="1">
    <location>
        <position position="76"/>
    </location>
    <ligand>
        <name>[4Fe-4S] cluster</name>
        <dbReference type="ChEBI" id="CHEBI:49883"/>
        <label>2</label>
        <note>4Fe-4S-S-AdoMet</note>
    </ligand>
</feature>
<feature type="binding site" evidence="1">
    <location>
        <position position="280"/>
    </location>
    <ligand>
        <name>[4Fe-4S] cluster</name>
        <dbReference type="ChEBI" id="CHEBI:49883"/>
        <label>1</label>
    </ligand>
</feature>
<protein>
    <recommendedName>
        <fullName evidence="1">Lipoyl synthase</fullName>
        <ecNumber evidence="1">2.8.1.8</ecNumber>
    </recommendedName>
    <alternativeName>
        <fullName evidence="1">Lip-syn</fullName>
        <shortName evidence="1">LS</shortName>
    </alternativeName>
    <alternativeName>
        <fullName evidence="1">Lipoate synthase</fullName>
    </alternativeName>
    <alternativeName>
        <fullName evidence="1">Lipoic acid synthase</fullName>
    </alternativeName>
    <alternativeName>
        <fullName evidence="1">Sulfur insertion protein LipA</fullName>
    </alternativeName>
</protein>
<keyword id="KW-0004">4Fe-4S</keyword>
<keyword id="KW-0963">Cytoplasm</keyword>
<keyword id="KW-0408">Iron</keyword>
<keyword id="KW-0411">Iron-sulfur</keyword>
<keyword id="KW-0479">Metal-binding</keyword>
<keyword id="KW-1185">Reference proteome</keyword>
<keyword id="KW-0949">S-adenosyl-L-methionine</keyword>
<keyword id="KW-0808">Transferase</keyword>
<organism>
    <name type="scientific">Nitratidesulfovibrio vulgaris (strain ATCC 29579 / DSM 644 / CCUG 34227 / NCIMB 8303 / VKM B-1760 / Hildenborough)</name>
    <name type="common">Desulfovibrio vulgaris</name>
    <dbReference type="NCBI Taxonomy" id="882"/>
    <lineage>
        <taxon>Bacteria</taxon>
        <taxon>Pseudomonadati</taxon>
        <taxon>Thermodesulfobacteriota</taxon>
        <taxon>Desulfovibrionia</taxon>
        <taxon>Desulfovibrionales</taxon>
        <taxon>Desulfovibrionaceae</taxon>
        <taxon>Nitratidesulfovibrio</taxon>
    </lineage>
</organism>
<evidence type="ECO:0000255" key="1">
    <source>
        <dbReference type="HAMAP-Rule" id="MF_00206"/>
    </source>
</evidence>
<evidence type="ECO:0000255" key="2">
    <source>
        <dbReference type="PROSITE-ProRule" id="PRU01266"/>
    </source>
</evidence>
<reference key="1">
    <citation type="journal article" date="2004" name="Nat. Biotechnol.">
        <title>The genome sequence of the anaerobic, sulfate-reducing bacterium Desulfovibrio vulgaris Hildenborough.</title>
        <authorList>
            <person name="Heidelberg J.F."/>
            <person name="Seshadri R."/>
            <person name="Haveman S.A."/>
            <person name="Hemme C.L."/>
            <person name="Paulsen I.T."/>
            <person name="Kolonay J.F."/>
            <person name="Eisen J.A."/>
            <person name="Ward N.L."/>
            <person name="Methe B.A."/>
            <person name="Brinkac L.M."/>
            <person name="Daugherty S.C."/>
            <person name="DeBoy R.T."/>
            <person name="Dodson R.J."/>
            <person name="Durkin A.S."/>
            <person name="Madupu R."/>
            <person name="Nelson W.C."/>
            <person name="Sullivan S.A."/>
            <person name="Fouts D.E."/>
            <person name="Haft D.H."/>
            <person name="Selengut J."/>
            <person name="Peterson J.D."/>
            <person name="Davidsen T.M."/>
            <person name="Zafar N."/>
            <person name="Zhou L."/>
            <person name="Radune D."/>
            <person name="Dimitrov G."/>
            <person name="Hance M."/>
            <person name="Tran K."/>
            <person name="Khouri H.M."/>
            <person name="Gill J."/>
            <person name="Utterback T.R."/>
            <person name="Feldblyum T.V."/>
            <person name="Wall J.D."/>
            <person name="Voordouw G."/>
            <person name="Fraser C.M."/>
        </authorList>
    </citation>
    <scope>NUCLEOTIDE SEQUENCE [LARGE SCALE GENOMIC DNA]</scope>
    <source>
        <strain>ATCC 29579 / DSM 644 / CCUG 34227 / NCIMB 8303 / VKM B-1760 / Hildenborough</strain>
    </source>
</reference>